<keyword id="KW-0067">ATP-binding</keyword>
<keyword id="KW-0175">Coiled coil</keyword>
<keyword id="KW-0963">Cytoplasm</keyword>
<keyword id="KW-0206">Cytoskeleton</keyword>
<keyword id="KW-0238">DNA-binding</keyword>
<keyword id="KW-1017">Isopeptide bond</keyword>
<keyword id="KW-0493">Microtubule</keyword>
<keyword id="KW-0505">Motor protein</keyword>
<keyword id="KW-0547">Nucleotide-binding</keyword>
<keyword id="KW-0539">Nucleus</keyword>
<keyword id="KW-0597">Phosphoprotein</keyword>
<keyword id="KW-1185">Reference proteome</keyword>
<keyword id="KW-0832">Ubl conjugation</keyword>
<name>KIF22_MOUSE</name>
<dbReference type="EMBL" id="AK075922">
    <property type="protein sequence ID" value="BAE43356.1"/>
    <property type="molecule type" value="mRNA"/>
</dbReference>
<dbReference type="EMBL" id="BC003427">
    <property type="protein sequence ID" value="AAH03427.1"/>
    <property type="molecule type" value="mRNA"/>
</dbReference>
<dbReference type="EMBL" id="AF013119">
    <property type="protein sequence ID" value="AAC39968.1"/>
    <property type="molecule type" value="mRNA"/>
</dbReference>
<dbReference type="CCDS" id="CCDS21855.1"/>
<dbReference type="RefSeq" id="NP_663563.1">
    <property type="nucleotide sequence ID" value="NM_145588.2"/>
</dbReference>
<dbReference type="SMR" id="Q3V300"/>
<dbReference type="BioGRID" id="225240">
    <property type="interactions" value="8"/>
</dbReference>
<dbReference type="FunCoup" id="Q3V300">
    <property type="interactions" value="1317"/>
</dbReference>
<dbReference type="IntAct" id="Q3V300">
    <property type="interactions" value="7"/>
</dbReference>
<dbReference type="STRING" id="10090.ENSMUSP00000032915"/>
<dbReference type="GlyGen" id="Q3V300">
    <property type="glycosylation" value="2 sites, 1 O-linked glycan (1 site)"/>
</dbReference>
<dbReference type="iPTMnet" id="Q3V300"/>
<dbReference type="PhosphoSitePlus" id="Q3V300"/>
<dbReference type="jPOST" id="Q3V300"/>
<dbReference type="PaxDb" id="10090-ENSMUSP00000032915"/>
<dbReference type="PeptideAtlas" id="Q3V300"/>
<dbReference type="ProteomicsDB" id="263603"/>
<dbReference type="Pumba" id="Q3V300"/>
<dbReference type="Antibodypedia" id="13324">
    <property type="antibodies" value="250 antibodies from 31 providers"/>
</dbReference>
<dbReference type="DNASU" id="110033"/>
<dbReference type="Ensembl" id="ENSMUST00000032915.8">
    <property type="protein sequence ID" value="ENSMUSP00000032915.7"/>
    <property type="gene ID" value="ENSMUSG00000030677.9"/>
</dbReference>
<dbReference type="GeneID" id="110033"/>
<dbReference type="KEGG" id="mmu:110033"/>
<dbReference type="UCSC" id="uc009jud.1">
    <property type="organism name" value="mouse"/>
</dbReference>
<dbReference type="AGR" id="MGI:109233"/>
<dbReference type="CTD" id="3835"/>
<dbReference type="MGI" id="MGI:109233">
    <property type="gene designation" value="Kif22"/>
</dbReference>
<dbReference type="VEuPathDB" id="HostDB:ENSMUSG00000030677"/>
<dbReference type="eggNOG" id="KOG0242">
    <property type="taxonomic scope" value="Eukaryota"/>
</dbReference>
<dbReference type="GeneTree" id="ENSGT00940000159632"/>
<dbReference type="HOGENOM" id="CLU_001485_27_1_1"/>
<dbReference type="InParanoid" id="Q3V300"/>
<dbReference type="OMA" id="VIREDRW"/>
<dbReference type="OrthoDB" id="3176171at2759"/>
<dbReference type="PhylomeDB" id="Q3V300"/>
<dbReference type="TreeFam" id="TF105233"/>
<dbReference type="Reactome" id="R-MMU-2132295">
    <property type="pathway name" value="MHC class II antigen presentation"/>
</dbReference>
<dbReference type="Reactome" id="R-MMU-6811434">
    <property type="pathway name" value="COPI-dependent Golgi-to-ER retrograde traffic"/>
</dbReference>
<dbReference type="Reactome" id="R-MMU-983189">
    <property type="pathway name" value="Kinesins"/>
</dbReference>
<dbReference type="BioGRID-ORCS" id="110033">
    <property type="hits" value="3 hits in 113 CRISPR screens"/>
</dbReference>
<dbReference type="ChiTaRS" id="Kif22">
    <property type="organism name" value="mouse"/>
</dbReference>
<dbReference type="PRO" id="PR:Q3V300"/>
<dbReference type="Proteomes" id="UP000000589">
    <property type="component" value="Chromosome 7"/>
</dbReference>
<dbReference type="RNAct" id="Q3V300">
    <property type="molecule type" value="protein"/>
</dbReference>
<dbReference type="Bgee" id="ENSMUSG00000030677">
    <property type="expression patterns" value="Expressed in late embryo and 264 other cell types or tissues"/>
</dbReference>
<dbReference type="ExpressionAtlas" id="Q3V300">
    <property type="expression patterns" value="baseline and differential"/>
</dbReference>
<dbReference type="GO" id="GO:0000785">
    <property type="term" value="C:chromatin"/>
    <property type="evidence" value="ECO:0000314"/>
    <property type="project" value="MGI"/>
</dbReference>
<dbReference type="GO" id="GO:0005829">
    <property type="term" value="C:cytosol"/>
    <property type="evidence" value="ECO:0007669"/>
    <property type="project" value="Ensembl"/>
</dbReference>
<dbReference type="GO" id="GO:0005874">
    <property type="term" value="C:microtubule"/>
    <property type="evidence" value="ECO:0007669"/>
    <property type="project" value="UniProtKB-KW"/>
</dbReference>
<dbReference type="GO" id="GO:0072686">
    <property type="term" value="C:mitotic spindle"/>
    <property type="evidence" value="ECO:0007669"/>
    <property type="project" value="Ensembl"/>
</dbReference>
<dbReference type="GO" id="GO:0016607">
    <property type="term" value="C:nuclear speck"/>
    <property type="evidence" value="ECO:0007669"/>
    <property type="project" value="Ensembl"/>
</dbReference>
<dbReference type="GO" id="GO:0005819">
    <property type="term" value="C:spindle"/>
    <property type="evidence" value="ECO:0000314"/>
    <property type="project" value="MGI"/>
</dbReference>
<dbReference type="GO" id="GO:0005524">
    <property type="term" value="F:ATP binding"/>
    <property type="evidence" value="ECO:0007669"/>
    <property type="project" value="UniProtKB-KW"/>
</dbReference>
<dbReference type="GO" id="GO:0003677">
    <property type="term" value="F:DNA binding"/>
    <property type="evidence" value="ECO:0007669"/>
    <property type="project" value="UniProtKB-KW"/>
</dbReference>
<dbReference type="GO" id="GO:0008017">
    <property type="term" value="F:microtubule binding"/>
    <property type="evidence" value="ECO:0007669"/>
    <property type="project" value="InterPro"/>
</dbReference>
<dbReference type="GO" id="GO:0003777">
    <property type="term" value="F:microtubule motor activity"/>
    <property type="evidence" value="ECO:0007669"/>
    <property type="project" value="InterPro"/>
</dbReference>
<dbReference type="GO" id="GO:0006281">
    <property type="term" value="P:DNA repair"/>
    <property type="evidence" value="ECO:0007669"/>
    <property type="project" value="InterPro"/>
</dbReference>
<dbReference type="GO" id="GO:0051310">
    <property type="term" value="P:metaphase chromosome alignment"/>
    <property type="evidence" value="ECO:0000250"/>
    <property type="project" value="UniProtKB"/>
</dbReference>
<dbReference type="GO" id="GO:0007018">
    <property type="term" value="P:microtubule-based movement"/>
    <property type="evidence" value="ECO:0007669"/>
    <property type="project" value="InterPro"/>
</dbReference>
<dbReference type="GO" id="GO:0007080">
    <property type="term" value="P:mitotic metaphase chromosome alignment"/>
    <property type="evidence" value="ECO:0000250"/>
    <property type="project" value="UniProtKB"/>
</dbReference>
<dbReference type="GO" id="GO:0007062">
    <property type="term" value="P:sister chromatid cohesion"/>
    <property type="evidence" value="ECO:0000250"/>
    <property type="project" value="UniProtKB"/>
</dbReference>
<dbReference type="CDD" id="cd01376">
    <property type="entry name" value="KISc_KID_like"/>
    <property type="match status" value="1"/>
</dbReference>
<dbReference type="FunFam" id="1.10.150.280:FF:000002">
    <property type="entry name" value="Kinesin-like protein"/>
    <property type="match status" value="1"/>
</dbReference>
<dbReference type="FunFam" id="3.40.850.10:FF:000043">
    <property type="entry name" value="Kinesin-like protein"/>
    <property type="match status" value="1"/>
</dbReference>
<dbReference type="Gene3D" id="1.10.150.280">
    <property type="entry name" value="AF1531-like domain"/>
    <property type="match status" value="1"/>
</dbReference>
<dbReference type="Gene3D" id="3.40.850.10">
    <property type="entry name" value="Kinesin motor domain"/>
    <property type="match status" value="1"/>
</dbReference>
<dbReference type="InterPro" id="IPR003583">
    <property type="entry name" value="Hlx-hairpin-Hlx_DNA-bd_motif"/>
</dbReference>
<dbReference type="InterPro" id="IPR027640">
    <property type="entry name" value="Kinesin-like_fam"/>
</dbReference>
<dbReference type="InterPro" id="IPR019821">
    <property type="entry name" value="Kinesin_motor_CS"/>
</dbReference>
<dbReference type="InterPro" id="IPR001752">
    <property type="entry name" value="Kinesin_motor_dom"/>
</dbReference>
<dbReference type="InterPro" id="IPR036961">
    <property type="entry name" value="Kinesin_motor_dom_sf"/>
</dbReference>
<dbReference type="InterPro" id="IPR027417">
    <property type="entry name" value="P-loop_NTPase"/>
</dbReference>
<dbReference type="InterPro" id="IPR010994">
    <property type="entry name" value="RuvA_2-like"/>
</dbReference>
<dbReference type="PANTHER" id="PTHR47969">
    <property type="entry name" value="CHROMOSOME-ASSOCIATED KINESIN KIF4A-RELATED"/>
    <property type="match status" value="1"/>
</dbReference>
<dbReference type="PANTHER" id="PTHR47969:SF9">
    <property type="entry name" value="KINESIN-LIKE PROTEIN"/>
    <property type="match status" value="1"/>
</dbReference>
<dbReference type="Pfam" id="PF12836">
    <property type="entry name" value="HHH_3"/>
    <property type="match status" value="1"/>
</dbReference>
<dbReference type="Pfam" id="PF00225">
    <property type="entry name" value="Kinesin"/>
    <property type="match status" value="1"/>
</dbReference>
<dbReference type="PRINTS" id="PR00380">
    <property type="entry name" value="KINESINHEAVY"/>
</dbReference>
<dbReference type="SMART" id="SM00278">
    <property type="entry name" value="HhH1"/>
    <property type="match status" value="2"/>
</dbReference>
<dbReference type="SMART" id="SM00129">
    <property type="entry name" value="KISc"/>
    <property type="match status" value="1"/>
</dbReference>
<dbReference type="SUPFAM" id="SSF52540">
    <property type="entry name" value="P-loop containing nucleoside triphosphate hydrolases"/>
    <property type="match status" value="1"/>
</dbReference>
<dbReference type="SUPFAM" id="SSF47781">
    <property type="entry name" value="RuvA domain 2-like"/>
    <property type="match status" value="1"/>
</dbReference>
<dbReference type="PROSITE" id="PS00411">
    <property type="entry name" value="KINESIN_MOTOR_1"/>
    <property type="match status" value="1"/>
</dbReference>
<dbReference type="PROSITE" id="PS50067">
    <property type="entry name" value="KINESIN_MOTOR_2"/>
    <property type="match status" value="1"/>
</dbReference>
<proteinExistence type="evidence at transcript level"/>
<sequence length="660" mass="73190">MSLRAKTCPQRREMASATSGPGRCVSKGGLGRRPPLARVRVAVRLRPFMDGETEAKELPCVRAIDSCSLEVANWKKYQETLKYQFDAFYGEKSTQQEVYVGSVQPILRHLLEGQNASVLAYGPTGAGKTHTMLGSPEQPGVIPRALMDLLQLAREESAEGRPWDVSVAMSYLEIYQEKVLDLLDPASGDLVIREDCRGNILIPGLTQKPITSFSDFEQHFLPASRNRAVGATRLNQRSSRSHAVLLVKVDQRERLTPFRQREGKLYLIDLAGSEDNRRTGNQGIRLKESGAINTSLFVLGKVVDALNQGLPRIPYRDSKLTRLLQDSLGGSAHSILIANIAPERRFYQDTISALNFTARSKEVINRPFTNESLQPHALAPVKLSQKELLGPSEAKKAKGPEEESTGSPESTAAPASASQKLSLLQKLSNMDPAMLENLLSMERLLGSQGSQGTPLLNTPKRERMVLMKTVEEKNLEIERLKMKQKELEAKVLAQEAPDPREKENTPTILQPPASYSGTVAKPLKKAVVMPLQRIQKQRESSNQIQLLKKGPKRKLEPSPESEAVEKDEDYWEVQISPELLAHGRKKLLDLLNEGSARELRSLQRIGQKKAQLIVGWRELHGPFSEVEDLEQVEGISGKQVESFLKANLLSLAASQHSGPS</sequence>
<evidence type="ECO:0000250" key="1">
    <source>
        <dbReference type="UniProtKB" id="Q14807"/>
    </source>
</evidence>
<evidence type="ECO:0000250" key="2">
    <source>
        <dbReference type="UniProtKB" id="Q9I869"/>
    </source>
</evidence>
<evidence type="ECO:0000255" key="3"/>
<evidence type="ECO:0000255" key="4">
    <source>
        <dbReference type="PROSITE-ProRule" id="PRU00283"/>
    </source>
</evidence>
<evidence type="ECO:0000256" key="5">
    <source>
        <dbReference type="SAM" id="MobiDB-lite"/>
    </source>
</evidence>
<evidence type="ECO:0000305" key="6"/>
<reference key="1">
    <citation type="journal article" date="2004" name="Genome Res.">
        <title>The status, quality, and expansion of the NIH full-length cDNA project: the Mammalian Gene Collection (MGC).</title>
        <authorList>
            <consortium name="The MGC Project Team"/>
        </authorList>
    </citation>
    <scope>NUCLEOTIDE SEQUENCE [LARGE SCALE MRNA]</scope>
    <source>
        <strain>FVB/N</strain>
        <tissue>Mammary tumor</tissue>
    </source>
</reference>
<reference key="2">
    <citation type="journal article" date="2005" name="Science">
        <title>The transcriptional landscape of the mammalian genome.</title>
        <authorList>
            <person name="Carninci P."/>
            <person name="Kasukawa T."/>
            <person name="Katayama S."/>
            <person name="Gough J."/>
            <person name="Frith M.C."/>
            <person name="Maeda N."/>
            <person name="Oyama R."/>
            <person name="Ravasi T."/>
            <person name="Lenhard B."/>
            <person name="Wells C."/>
            <person name="Kodzius R."/>
            <person name="Shimokawa K."/>
            <person name="Bajic V.B."/>
            <person name="Brenner S.E."/>
            <person name="Batalov S."/>
            <person name="Forrest A.R."/>
            <person name="Zavolan M."/>
            <person name="Davis M.J."/>
            <person name="Wilming L.G."/>
            <person name="Aidinis V."/>
            <person name="Allen J.E."/>
            <person name="Ambesi-Impiombato A."/>
            <person name="Apweiler R."/>
            <person name="Aturaliya R.N."/>
            <person name="Bailey T.L."/>
            <person name="Bansal M."/>
            <person name="Baxter L."/>
            <person name="Beisel K.W."/>
            <person name="Bersano T."/>
            <person name="Bono H."/>
            <person name="Chalk A.M."/>
            <person name="Chiu K.P."/>
            <person name="Choudhary V."/>
            <person name="Christoffels A."/>
            <person name="Clutterbuck D.R."/>
            <person name="Crowe M.L."/>
            <person name="Dalla E."/>
            <person name="Dalrymple B.P."/>
            <person name="de Bono B."/>
            <person name="Della Gatta G."/>
            <person name="di Bernardo D."/>
            <person name="Down T."/>
            <person name="Engstrom P."/>
            <person name="Fagiolini M."/>
            <person name="Faulkner G."/>
            <person name="Fletcher C.F."/>
            <person name="Fukushima T."/>
            <person name="Furuno M."/>
            <person name="Futaki S."/>
            <person name="Gariboldi M."/>
            <person name="Georgii-Hemming P."/>
            <person name="Gingeras T.R."/>
            <person name="Gojobori T."/>
            <person name="Green R.E."/>
            <person name="Gustincich S."/>
            <person name="Harbers M."/>
            <person name="Hayashi Y."/>
            <person name="Hensch T.K."/>
            <person name="Hirokawa N."/>
            <person name="Hill D."/>
            <person name="Huminiecki L."/>
            <person name="Iacono M."/>
            <person name="Ikeo K."/>
            <person name="Iwama A."/>
            <person name="Ishikawa T."/>
            <person name="Jakt M."/>
            <person name="Kanapin A."/>
            <person name="Katoh M."/>
            <person name="Kawasawa Y."/>
            <person name="Kelso J."/>
            <person name="Kitamura H."/>
            <person name="Kitano H."/>
            <person name="Kollias G."/>
            <person name="Krishnan S.P."/>
            <person name="Kruger A."/>
            <person name="Kummerfeld S.K."/>
            <person name="Kurochkin I.V."/>
            <person name="Lareau L.F."/>
            <person name="Lazarevic D."/>
            <person name="Lipovich L."/>
            <person name="Liu J."/>
            <person name="Liuni S."/>
            <person name="McWilliam S."/>
            <person name="Madan Babu M."/>
            <person name="Madera M."/>
            <person name="Marchionni L."/>
            <person name="Matsuda H."/>
            <person name="Matsuzawa S."/>
            <person name="Miki H."/>
            <person name="Mignone F."/>
            <person name="Miyake S."/>
            <person name="Morris K."/>
            <person name="Mottagui-Tabar S."/>
            <person name="Mulder N."/>
            <person name="Nakano N."/>
            <person name="Nakauchi H."/>
            <person name="Ng P."/>
            <person name="Nilsson R."/>
            <person name="Nishiguchi S."/>
            <person name="Nishikawa S."/>
            <person name="Nori F."/>
            <person name="Ohara O."/>
            <person name="Okazaki Y."/>
            <person name="Orlando V."/>
            <person name="Pang K.C."/>
            <person name="Pavan W.J."/>
            <person name="Pavesi G."/>
            <person name="Pesole G."/>
            <person name="Petrovsky N."/>
            <person name="Piazza S."/>
            <person name="Reed J."/>
            <person name="Reid J.F."/>
            <person name="Ring B.Z."/>
            <person name="Ringwald M."/>
            <person name="Rost B."/>
            <person name="Ruan Y."/>
            <person name="Salzberg S.L."/>
            <person name="Sandelin A."/>
            <person name="Schneider C."/>
            <person name="Schoenbach C."/>
            <person name="Sekiguchi K."/>
            <person name="Semple C.A."/>
            <person name="Seno S."/>
            <person name="Sessa L."/>
            <person name="Sheng Y."/>
            <person name="Shibata Y."/>
            <person name="Shimada H."/>
            <person name="Shimada K."/>
            <person name="Silva D."/>
            <person name="Sinclair B."/>
            <person name="Sperling S."/>
            <person name="Stupka E."/>
            <person name="Sugiura K."/>
            <person name="Sultana R."/>
            <person name="Takenaka Y."/>
            <person name="Taki K."/>
            <person name="Tammoja K."/>
            <person name="Tan S.L."/>
            <person name="Tang S."/>
            <person name="Taylor M.S."/>
            <person name="Tegner J."/>
            <person name="Teichmann S.A."/>
            <person name="Ueda H.R."/>
            <person name="van Nimwegen E."/>
            <person name="Verardo R."/>
            <person name="Wei C.L."/>
            <person name="Yagi K."/>
            <person name="Yamanishi H."/>
            <person name="Zabarovsky E."/>
            <person name="Zhu S."/>
            <person name="Zimmer A."/>
            <person name="Hide W."/>
            <person name="Bult C."/>
            <person name="Grimmond S.M."/>
            <person name="Teasdale R.D."/>
            <person name="Liu E.T."/>
            <person name="Brusic V."/>
            <person name="Quackenbush J."/>
            <person name="Wahlestedt C."/>
            <person name="Mattick J.S."/>
            <person name="Hume D.A."/>
            <person name="Kai C."/>
            <person name="Sasaki D."/>
            <person name="Tomaru Y."/>
            <person name="Fukuda S."/>
            <person name="Kanamori-Katayama M."/>
            <person name="Suzuki M."/>
            <person name="Aoki J."/>
            <person name="Arakawa T."/>
            <person name="Iida J."/>
            <person name="Imamura K."/>
            <person name="Itoh M."/>
            <person name="Kato T."/>
            <person name="Kawaji H."/>
            <person name="Kawagashira N."/>
            <person name="Kawashima T."/>
            <person name="Kojima M."/>
            <person name="Kondo S."/>
            <person name="Konno H."/>
            <person name="Nakano K."/>
            <person name="Ninomiya N."/>
            <person name="Nishio T."/>
            <person name="Okada M."/>
            <person name="Plessy C."/>
            <person name="Shibata K."/>
            <person name="Shiraki T."/>
            <person name="Suzuki S."/>
            <person name="Tagami M."/>
            <person name="Waki K."/>
            <person name="Watahiki A."/>
            <person name="Okamura-Oho Y."/>
            <person name="Suzuki H."/>
            <person name="Kawai J."/>
            <person name="Hayashizaki Y."/>
        </authorList>
    </citation>
    <scope>NUCLEOTIDE SEQUENCE [LARGE SCALE MRNA]</scope>
    <source>
        <strain>C57BL/6J</strain>
    </source>
</reference>
<reference key="3">
    <citation type="journal article" date="1997" name="Genomics">
        <title>Identification, partial characterization, and genetic mapping of kinesin-like protein genes in mouse.</title>
        <authorList>
            <person name="Yang Z."/>
            <person name="Hanlon D.W."/>
            <person name="Marszalek J.R."/>
            <person name="Goldstein L.S."/>
        </authorList>
    </citation>
    <scope>NUCLEOTIDE SEQUENCE [MRNA] OF 127-274</scope>
</reference>
<protein>
    <recommendedName>
        <fullName>Kinesin-like protein KIF22</fullName>
    </recommendedName>
</protein>
<accession>Q3V300</accession>
<accession>O35232</accession>
<accession>Q99LC7</accession>
<feature type="chain" id="PRO_0000262921" description="Kinesin-like protein KIF22">
    <location>
        <begin position="1"/>
        <end position="660"/>
    </location>
</feature>
<feature type="domain" description="Kinesin motor" evidence="4">
    <location>
        <begin position="38"/>
        <end position="363"/>
    </location>
</feature>
<feature type="region of interest" description="Disordered" evidence="5">
    <location>
        <begin position="1"/>
        <end position="31"/>
    </location>
</feature>
<feature type="region of interest" description="Disordered" evidence="5">
    <location>
        <begin position="391"/>
        <end position="418"/>
    </location>
</feature>
<feature type="region of interest" description="Disordered" evidence="5">
    <location>
        <begin position="493"/>
        <end position="516"/>
    </location>
</feature>
<feature type="region of interest" description="Disordered" evidence="5">
    <location>
        <begin position="534"/>
        <end position="567"/>
    </location>
</feature>
<feature type="coiled-coil region" evidence="3">
    <location>
        <begin position="460"/>
        <end position="505"/>
    </location>
</feature>
<feature type="compositionally biased region" description="Low complexity" evidence="5">
    <location>
        <begin position="405"/>
        <end position="418"/>
    </location>
</feature>
<feature type="compositionally biased region" description="Polar residues" evidence="5">
    <location>
        <begin position="505"/>
        <end position="516"/>
    </location>
</feature>
<feature type="binding site" evidence="4">
    <location>
        <begin position="122"/>
        <end position="129"/>
    </location>
    <ligand>
        <name>ATP</name>
        <dbReference type="ChEBI" id="CHEBI:30616"/>
    </ligand>
</feature>
<feature type="modified residue" description="Phosphoserine" evidence="1">
    <location>
        <position position="407"/>
    </location>
</feature>
<feature type="modified residue" description="Phosphoserine" evidence="1">
    <location>
        <position position="422"/>
    </location>
</feature>
<feature type="modified residue" description="Phosphoserine" evidence="1">
    <location>
        <position position="447"/>
    </location>
</feature>
<feature type="modified residue" description="Phosphoserine" evidence="1">
    <location>
        <position position="540"/>
    </location>
</feature>
<feature type="modified residue" description="Phosphoserine" evidence="1">
    <location>
        <position position="576"/>
    </location>
</feature>
<feature type="cross-link" description="Glycyl lysine isopeptide (Lys-Gly) (interchain with G-Cter in SUMO2)" evidence="1">
    <location>
        <position position="460"/>
    </location>
</feature>
<feature type="sequence conflict" description="In Ref. 1; BAE43356." evidence="6" ref="1">
    <original>C</original>
    <variation>R</variation>
    <location>
        <position position="60"/>
    </location>
</feature>
<feature type="sequence conflict" description="In Ref. 1; BAE43356." evidence="6" ref="1">
    <original>L</original>
    <variation>I</variation>
    <location>
        <position position="267"/>
    </location>
</feature>
<feature type="sequence conflict" description="In Ref. 1; BAE43356." evidence="6" ref="1">
    <original>V</original>
    <variation>E</variation>
    <location>
        <position position="528"/>
    </location>
</feature>
<comment type="function">
    <text evidence="1 2">Kinesin family member that is involved in spindle formation and the movements of chromosomes during mitosis and meiosis. Binds to microtubules and to DNA. Plays a role in congression of laterally attached chromosomes in NDC80-depleted cells.</text>
</comment>
<comment type="subunit">
    <text evidence="1">Interacts with FAM83D and SIAH1.</text>
</comment>
<comment type="subcellular location">
    <subcellularLocation>
        <location evidence="1">Nucleus</location>
    </subcellularLocation>
    <subcellularLocation>
        <location evidence="6">Cytoplasm</location>
        <location evidence="6">Cytoskeleton</location>
    </subcellularLocation>
</comment>
<comment type="PTM">
    <text evidence="1">Ubiquitinated; mediated by SIAH1 and leading to its subsequent proteasomal degradation.</text>
</comment>
<comment type="similarity">
    <text evidence="4">Belongs to the TRAFAC class myosin-kinesin ATPase superfamily. Kinesin family.</text>
</comment>
<gene>
    <name type="primary">Kif22</name>
</gene>
<organism>
    <name type="scientific">Mus musculus</name>
    <name type="common">Mouse</name>
    <dbReference type="NCBI Taxonomy" id="10090"/>
    <lineage>
        <taxon>Eukaryota</taxon>
        <taxon>Metazoa</taxon>
        <taxon>Chordata</taxon>
        <taxon>Craniata</taxon>
        <taxon>Vertebrata</taxon>
        <taxon>Euteleostomi</taxon>
        <taxon>Mammalia</taxon>
        <taxon>Eutheria</taxon>
        <taxon>Euarchontoglires</taxon>
        <taxon>Glires</taxon>
        <taxon>Rodentia</taxon>
        <taxon>Myomorpha</taxon>
        <taxon>Muroidea</taxon>
        <taxon>Muridae</taxon>
        <taxon>Murinae</taxon>
        <taxon>Mus</taxon>
        <taxon>Mus</taxon>
    </lineage>
</organism>